<dbReference type="EC" id="4.3.3.7" evidence="1"/>
<dbReference type="EMBL" id="AE009442">
    <property type="protein sequence ID" value="AAO29573.1"/>
    <property type="molecule type" value="Genomic_DNA"/>
</dbReference>
<dbReference type="RefSeq" id="WP_004089694.1">
    <property type="nucleotide sequence ID" value="NC_004556.1"/>
</dbReference>
<dbReference type="SMR" id="Q87AT3"/>
<dbReference type="GeneID" id="93905582"/>
<dbReference type="KEGG" id="xft:PD_1737"/>
<dbReference type="HOGENOM" id="CLU_049343_7_1_6"/>
<dbReference type="UniPathway" id="UPA00034">
    <property type="reaction ID" value="UER00017"/>
</dbReference>
<dbReference type="Proteomes" id="UP000002516">
    <property type="component" value="Chromosome"/>
</dbReference>
<dbReference type="GO" id="GO:0005829">
    <property type="term" value="C:cytosol"/>
    <property type="evidence" value="ECO:0007669"/>
    <property type="project" value="TreeGrafter"/>
</dbReference>
<dbReference type="GO" id="GO:0008840">
    <property type="term" value="F:4-hydroxy-tetrahydrodipicolinate synthase activity"/>
    <property type="evidence" value="ECO:0007669"/>
    <property type="project" value="UniProtKB-UniRule"/>
</dbReference>
<dbReference type="GO" id="GO:0019877">
    <property type="term" value="P:diaminopimelate biosynthetic process"/>
    <property type="evidence" value="ECO:0007669"/>
    <property type="project" value="UniProtKB-UniRule"/>
</dbReference>
<dbReference type="GO" id="GO:0009089">
    <property type="term" value="P:lysine biosynthetic process via diaminopimelate"/>
    <property type="evidence" value="ECO:0007669"/>
    <property type="project" value="UniProtKB-UniRule"/>
</dbReference>
<dbReference type="CDD" id="cd00950">
    <property type="entry name" value="DHDPS"/>
    <property type="match status" value="1"/>
</dbReference>
<dbReference type="Gene3D" id="3.20.20.70">
    <property type="entry name" value="Aldolase class I"/>
    <property type="match status" value="1"/>
</dbReference>
<dbReference type="HAMAP" id="MF_00418">
    <property type="entry name" value="DapA"/>
    <property type="match status" value="1"/>
</dbReference>
<dbReference type="InterPro" id="IPR013785">
    <property type="entry name" value="Aldolase_TIM"/>
</dbReference>
<dbReference type="InterPro" id="IPR005263">
    <property type="entry name" value="DapA"/>
</dbReference>
<dbReference type="InterPro" id="IPR002220">
    <property type="entry name" value="DapA-like"/>
</dbReference>
<dbReference type="InterPro" id="IPR020625">
    <property type="entry name" value="Schiff_base-form_aldolases_AS"/>
</dbReference>
<dbReference type="InterPro" id="IPR020624">
    <property type="entry name" value="Schiff_base-form_aldolases_CS"/>
</dbReference>
<dbReference type="NCBIfam" id="TIGR00674">
    <property type="entry name" value="dapA"/>
    <property type="match status" value="1"/>
</dbReference>
<dbReference type="PANTHER" id="PTHR12128:SF66">
    <property type="entry name" value="4-HYDROXY-2-OXOGLUTARATE ALDOLASE, MITOCHONDRIAL"/>
    <property type="match status" value="1"/>
</dbReference>
<dbReference type="PANTHER" id="PTHR12128">
    <property type="entry name" value="DIHYDRODIPICOLINATE SYNTHASE"/>
    <property type="match status" value="1"/>
</dbReference>
<dbReference type="Pfam" id="PF00701">
    <property type="entry name" value="DHDPS"/>
    <property type="match status" value="1"/>
</dbReference>
<dbReference type="PIRSF" id="PIRSF001365">
    <property type="entry name" value="DHDPS"/>
    <property type="match status" value="1"/>
</dbReference>
<dbReference type="PRINTS" id="PR00146">
    <property type="entry name" value="DHPICSNTHASE"/>
</dbReference>
<dbReference type="SMART" id="SM01130">
    <property type="entry name" value="DHDPS"/>
    <property type="match status" value="1"/>
</dbReference>
<dbReference type="SUPFAM" id="SSF51569">
    <property type="entry name" value="Aldolase"/>
    <property type="match status" value="1"/>
</dbReference>
<dbReference type="PROSITE" id="PS00665">
    <property type="entry name" value="DHDPS_1"/>
    <property type="match status" value="1"/>
</dbReference>
<dbReference type="PROSITE" id="PS00666">
    <property type="entry name" value="DHDPS_2"/>
    <property type="match status" value="1"/>
</dbReference>
<comment type="function">
    <text evidence="1">Catalyzes the condensation of (S)-aspartate-beta-semialdehyde [(S)-ASA] and pyruvate to 4-hydroxy-tetrahydrodipicolinate (HTPA).</text>
</comment>
<comment type="catalytic activity">
    <reaction evidence="1">
        <text>L-aspartate 4-semialdehyde + pyruvate = (2S,4S)-4-hydroxy-2,3,4,5-tetrahydrodipicolinate + H2O + H(+)</text>
        <dbReference type="Rhea" id="RHEA:34171"/>
        <dbReference type="ChEBI" id="CHEBI:15361"/>
        <dbReference type="ChEBI" id="CHEBI:15377"/>
        <dbReference type="ChEBI" id="CHEBI:15378"/>
        <dbReference type="ChEBI" id="CHEBI:67139"/>
        <dbReference type="ChEBI" id="CHEBI:537519"/>
        <dbReference type="EC" id="4.3.3.7"/>
    </reaction>
</comment>
<comment type="pathway">
    <text evidence="1">Amino-acid biosynthesis; L-lysine biosynthesis via DAP pathway; (S)-tetrahydrodipicolinate from L-aspartate: step 3/4.</text>
</comment>
<comment type="subunit">
    <text evidence="1">Homotetramer; dimer of dimers.</text>
</comment>
<comment type="subcellular location">
    <subcellularLocation>
        <location evidence="1">Cytoplasm</location>
    </subcellularLocation>
</comment>
<comment type="similarity">
    <text evidence="1">Belongs to the DapA family.</text>
</comment>
<comment type="caution">
    <text evidence="2">Was originally thought to be a dihydrodipicolinate synthase (DHDPS), catalyzing the condensation of (S)-aspartate-beta-semialdehyde [(S)-ASA] and pyruvate to dihydrodipicolinate (DHDP). However, it was shown in E.coli that the product of the enzymatic reaction is not dihydrodipicolinate but in fact (4S)-4-hydroxy-2,3,4,5-tetrahydro-(2S)-dipicolinic acid (HTPA), and that the consecutive dehydration reaction leading to DHDP is not spontaneous but catalyzed by DapB.</text>
</comment>
<feature type="chain" id="PRO_0000103189" description="4-hydroxy-tetrahydrodipicolinate synthase">
    <location>
        <begin position="1"/>
        <end position="302"/>
    </location>
</feature>
<feature type="active site" description="Proton donor/acceptor" evidence="1">
    <location>
        <position position="134"/>
    </location>
</feature>
<feature type="active site" description="Schiff-base intermediate with substrate" evidence="1">
    <location>
        <position position="162"/>
    </location>
</feature>
<feature type="binding site" evidence="1">
    <location>
        <position position="46"/>
    </location>
    <ligand>
        <name>pyruvate</name>
        <dbReference type="ChEBI" id="CHEBI:15361"/>
    </ligand>
</feature>
<feature type="binding site" evidence="1">
    <location>
        <position position="204"/>
    </location>
    <ligand>
        <name>pyruvate</name>
        <dbReference type="ChEBI" id="CHEBI:15361"/>
    </ligand>
</feature>
<feature type="site" description="Part of a proton relay during catalysis" evidence="1">
    <location>
        <position position="45"/>
    </location>
</feature>
<feature type="site" description="Part of a proton relay during catalysis" evidence="1">
    <location>
        <position position="108"/>
    </location>
</feature>
<sequence length="302" mass="31557">MSLSGIITALVTPFDRDGAFDRDAWIRLLDMQLAGGVQGVVIAGSTGEAATLTDAEYDEMLCSAVVRVGGRVPVLAGTGLSGTAKTISQTKRAADNGAGYALVVTPPYIRPNQGGLKAHYLAVAEQGGLPVVLYNVPSRTGCDLLPETVADLAGHPNIVGIKEACASRERVQALLALRRPGFAVFSGDDSSAARSMLDGADGLVSVASNVLPSAYRHLCDLARAGERGAIDLWNARLSDFHAFCGLDSNPIPIKALLQRIGIGYGLRLPLLPLSVCHHDIADHLADQVAALEALSSRKIVTA</sequence>
<reference key="1">
    <citation type="journal article" date="2003" name="J. Bacteriol.">
        <title>Comparative analyses of the complete genome sequences of Pierce's disease and citrus variegated chlorosis strains of Xylella fastidiosa.</title>
        <authorList>
            <person name="Van Sluys M.A."/>
            <person name="de Oliveira M.C."/>
            <person name="Monteiro-Vitorello C.B."/>
            <person name="Miyaki C.Y."/>
            <person name="Furlan L.R."/>
            <person name="Camargo L.E.A."/>
            <person name="da Silva A.C.R."/>
            <person name="Moon D.H."/>
            <person name="Takita M.A."/>
            <person name="Lemos E.G.M."/>
            <person name="Machado M.A."/>
            <person name="Ferro M.I.T."/>
            <person name="da Silva F.R."/>
            <person name="Goldman M.H.S."/>
            <person name="Goldman G.H."/>
            <person name="Lemos M.V.F."/>
            <person name="El-Dorry H."/>
            <person name="Tsai S.M."/>
            <person name="Carrer H."/>
            <person name="Carraro D.M."/>
            <person name="de Oliveira R.C."/>
            <person name="Nunes L.R."/>
            <person name="Siqueira W.J."/>
            <person name="Coutinho L.L."/>
            <person name="Kimura E.T."/>
            <person name="Ferro E.S."/>
            <person name="Harakava R."/>
            <person name="Kuramae E.E."/>
            <person name="Marino C.L."/>
            <person name="Giglioti E."/>
            <person name="Abreu I.L."/>
            <person name="Alves L.M.C."/>
            <person name="do Amaral A.M."/>
            <person name="Baia G.S."/>
            <person name="Blanco S.R."/>
            <person name="Brito M.S."/>
            <person name="Cannavan F.S."/>
            <person name="Celestino A.V."/>
            <person name="da Cunha A.F."/>
            <person name="Fenille R.C."/>
            <person name="Ferro J.A."/>
            <person name="Formighieri E.F."/>
            <person name="Kishi L.T."/>
            <person name="Leoni S.G."/>
            <person name="Oliveira A.R."/>
            <person name="Rosa V.E. Jr."/>
            <person name="Sassaki F.T."/>
            <person name="Sena J.A.D."/>
            <person name="de Souza A.A."/>
            <person name="Truffi D."/>
            <person name="Tsukumo F."/>
            <person name="Yanai G.M."/>
            <person name="Zaros L.G."/>
            <person name="Civerolo E.L."/>
            <person name="Simpson A.J.G."/>
            <person name="Almeida N.F. Jr."/>
            <person name="Setubal J.C."/>
            <person name="Kitajima J.P."/>
        </authorList>
    </citation>
    <scope>NUCLEOTIDE SEQUENCE [LARGE SCALE GENOMIC DNA]</scope>
    <source>
        <strain>Temecula1 / ATCC 700964</strain>
    </source>
</reference>
<proteinExistence type="inferred from homology"/>
<gene>
    <name evidence="1" type="primary">dapA</name>
    <name type="ordered locus">PD_1737</name>
</gene>
<accession>Q87AT3</accession>
<name>DAPA_XYLFT</name>
<keyword id="KW-0028">Amino-acid biosynthesis</keyword>
<keyword id="KW-0963">Cytoplasm</keyword>
<keyword id="KW-0220">Diaminopimelate biosynthesis</keyword>
<keyword id="KW-0456">Lyase</keyword>
<keyword id="KW-0457">Lysine biosynthesis</keyword>
<keyword id="KW-1185">Reference proteome</keyword>
<keyword id="KW-0704">Schiff base</keyword>
<evidence type="ECO:0000255" key="1">
    <source>
        <dbReference type="HAMAP-Rule" id="MF_00418"/>
    </source>
</evidence>
<evidence type="ECO:0000305" key="2"/>
<protein>
    <recommendedName>
        <fullName evidence="1">4-hydroxy-tetrahydrodipicolinate synthase</fullName>
        <shortName evidence="1">HTPA synthase</shortName>
        <ecNumber evidence="1">4.3.3.7</ecNumber>
    </recommendedName>
</protein>
<organism>
    <name type="scientific">Xylella fastidiosa (strain Temecula1 / ATCC 700964)</name>
    <dbReference type="NCBI Taxonomy" id="183190"/>
    <lineage>
        <taxon>Bacteria</taxon>
        <taxon>Pseudomonadati</taxon>
        <taxon>Pseudomonadota</taxon>
        <taxon>Gammaproteobacteria</taxon>
        <taxon>Lysobacterales</taxon>
        <taxon>Lysobacteraceae</taxon>
        <taxon>Xylella</taxon>
    </lineage>
</organism>